<accession>P42300</accession>
<proteinExistence type="predicted"/>
<reference key="1">
    <citation type="journal article" date="1995" name="Microbiology">
        <title>Cloning and sequencing of a 29 kb region of the Bacillus subtilis genome containing the hut and wapA loci.</title>
        <authorList>
            <person name="Yoshida K."/>
            <person name="Sano H."/>
            <person name="Seki S."/>
            <person name="Oda M."/>
            <person name="Fujimura M."/>
            <person name="Fujita Y."/>
        </authorList>
    </citation>
    <scope>NUCLEOTIDE SEQUENCE [GENOMIC DNA]</scope>
    <source>
        <strain>168 / BGSC1A1</strain>
    </source>
</reference>
<reference key="2">
    <citation type="journal article" date="1996" name="Microbiology">
        <title>Sequencing of a 65 kb region of the Bacillus subtilis genome containing the lic and cel loci, and creation of a 177 kb contig covering the gnt-sacXY region.</title>
        <authorList>
            <person name="Yoshida K."/>
            <person name="Shindo K."/>
            <person name="Sano H."/>
            <person name="Seki S."/>
            <person name="Fujimura M."/>
            <person name="Yanai N."/>
            <person name="Miwa Y."/>
            <person name="Fujita Y."/>
        </authorList>
    </citation>
    <scope>NUCLEOTIDE SEQUENCE [GENOMIC DNA]</scope>
    <source>
        <strain>168 / BGSC1A1</strain>
    </source>
</reference>
<reference key="3">
    <citation type="journal article" date="1997" name="Nature">
        <title>The complete genome sequence of the Gram-positive bacterium Bacillus subtilis.</title>
        <authorList>
            <person name="Kunst F."/>
            <person name="Ogasawara N."/>
            <person name="Moszer I."/>
            <person name="Albertini A.M."/>
            <person name="Alloni G."/>
            <person name="Azevedo V."/>
            <person name="Bertero M.G."/>
            <person name="Bessieres P."/>
            <person name="Bolotin A."/>
            <person name="Borchert S."/>
            <person name="Borriss R."/>
            <person name="Boursier L."/>
            <person name="Brans A."/>
            <person name="Braun M."/>
            <person name="Brignell S.C."/>
            <person name="Bron S."/>
            <person name="Brouillet S."/>
            <person name="Bruschi C.V."/>
            <person name="Caldwell B."/>
            <person name="Capuano V."/>
            <person name="Carter N.M."/>
            <person name="Choi S.-K."/>
            <person name="Codani J.-J."/>
            <person name="Connerton I.F."/>
            <person name="Cummings N.J."/>
            <person name="Daniel R.A."/>
            <person name="Denizot F."/>
            <person name="Devine K.M."/>
            <person name="Duesterhoeft A."/>
            <person name="Ehrlich S.D."/>
            <person name="Emmerson P.T."/>
            <person name="Entian K.-D."/>
            <person name="Errington J."/>
            <person name="Fabret C."/>
            <person name="Ferrari E."/>
            <person name="Foulger D."/>
            <person name="Fritz C."/>
            <person name="Fujita M."/>
            <person name="Fujita Y."/>
            <person name="Fuma S."/>
            <person name="Galizzi A."/>
            <person name="Galleron N."/>
            <person name="Ghim S.-Y."/>
            <person name="Glaser P."/>
            <person name="Goffeau A."/>
            <person name="Golightly E.J."/>
            <person name="Grandi G."/>
            <person name="Guiseppi G."/>
            <person name="Guy B.J."/>
            <person name="Haga K."/>
            <person name="Haiech J."/>
            <person name="Harwood C.R."/>
            <person name="Henaut A."/>
            <person name="Hilbert H."/>
            <person name="Holsappel S."/>
            <person name="Hosono S."/>
            <person name="Hullo M.-F."/>
            <person name="Itaya M."/>
            <person name="Jones L.-M."/>
            <person name="Joris B."/>
            <person name="Karamata D."/>
            <person name="Kasahara Y."/>
            <person name="Klaerr-Blanchard M."/>
            <person name="Klein C."/>
            <person name="Kobayashi Y."/>
            <person name="Koetter P."/>
            <person name="Koningstein G."/>
            <person name="Krogh S."/>
            <person name="Kumano M."/>
            <person name="Kurita K."/>
            <person name="Lapidus A."/>
            <person name="Lardinois S."/>
            <person name="Lauber J."/>
            <person name="Lazarevic V."/>
            <person name="Lee S.-M."/>
            <person name="Levine A."/>
            <person name="Liu H."/>
            <person name="Masuda S."/>
            <person name="Mauel C."/>
            <person name="Medigue C."/>
            <person name="Medina N."/>
            <person name="Mellado R.P."/>
            <person name="Mizuno M."/>
            <person name="Moestl D."/>
            <person name="Nakai S."/>
            <person name="Noback M."/>
            <person name="Noone D."/>
            <person name="O'Reilly M."/>
            <person name="Ogawa K."/>
            <person name="Ogiwara A."/>
            <person name="Oudega B."/>
            <person name="Park S.-H."/>
            <person name="Parro V."/>
            <person name="Pohl T.M."/>
            <person name="Portetelle D."/>
            <person name="Porwollik S."/>
            <person name="Prescott A.M."/>
            <person name="Presecan E."/>
            <person name="Pujic P."/>
            <person name="Purnelle B."/>
            <person name="Rapoport G."/>
            <person name="Rey M."/>
            <person name="Reynolds S."/>
            <person name="Rieger M."/>
            <person name="Rivolta C."/>
            <person name="Rocha E."/>
            <person name="Roche B."/>
            <person name="Rose M."/>
            <person name="Sadaie Y."/>
            <person name="Sato T."/>
            <person name="Scanlan E."/>
            <person name="Schleich S."/>
            <person name="Schroeter R."/>
            <person name="Scoffone F."/>
            <person name="Sekiguchi J."/>
            <person name="Sekowska A."/>
            <person name="Seror S.J."/>
            <person name="Serror P."/>
            <person name="Shin B.-S."/>
            <person name="Soldo B."/>
            <person name="Sorokin A."/>
            <person name="Tacconi E."/>
            <person name="Takagi T."/>
            <person name="Takahashi H."/>
            <person name="Takemaru K."/>
            <person name="Takeuchi M."/>
            <person name="Tamakoshi A."/>
            <person name="Tanaka T."/>
            <person name="Terpstra P."/>
            <person name="Tognoni A."/>
            <person name="Tosato V."/>
            <person name="Uchiyama S."/>
            <person name="Vandenbol M."/>
            <person name="Vannier F."/>
            <person name="Vassarotti A."/>
            <person name="Viari A."/>
            <person name="Wambutt R."/>
            <person name="Wedler E."/>
            <person name="Wedler H."/>
            <person name="Weitzenegger T."/>
            <person name="Winters P."/>
            <person name="Wipat A."/>
            <person name="Yamamoto H."/>
            <person name="Yamane K."/>
            <person name="Yasumoto K."/>
            <person name="Yata K."/>
            <person name="Yoshida K."/>
            <person name="Yoshikawa H.-F."/>
            <person name="Zumstein E."/>
            <person name="Yoshikawa H."/>
            <person name="Danchin A."/>
        </authorList>
    </citation>
    <scope>NUCLEOTIDE SEQUENCE [LARGE SCALE GENOMIC DNA]</scope>
    <source>
        <strain>168</strain>
    </source>
</reference>
<protein>
    <recommendedName>
        <fullName>Uncharacterized protein YxiH</fullName>
    </recommendedName>
</protein>
<evidence type="ECO:0000305" key="1"/>
<keyword id="KW-1185">Reference proteome</keyword>
<organism>
    <name type="scientific">Bacillus subtilis (strain 168)</name>
    <dbReference type="NCBI Taxonomy" id="224308"/>
    <lineage>
        <taxon>Bacteria</taxon>
        <taxon>Bacillati</taxon>
        <taxon>Bacillota</taxon>
        <taxon>Bacilli</taxon>
        <taxon>Bacillales</taxon>
        <taxon>Bacillaceae</taxon>
        <taxon>Bacillus</taxon>
    </lineage>
</organism>
<feature type="chain" id="PRO_0000050026" description="Uncharacterized protein YxiH">
    <location>
        <begin position="1"/>
        <end position="109"/>
    </location>
</feature>
<feature type="sequence conflict" description="In Ref. 1; BAA11687." evidence="1" ref="1">
    <original>F</original>
    <variation>S</variation>
    <location>
        <position position="19"/>
    </location>
</feature>
<dbReference type="EMBL" id="D31856">
    <property type="protein sequence ID" value="BAA06660.1"/>
    <property type="molecule type" value="Genomic_DNA"/>
</dbReference>
<dbReference type="EMBL" id="D83026">
    <property type="protein sequence ID" value="BAA11687.1"/>
    <property type="molecule type" value="Genomic_DNA"/>
</dbReference>
<dbReference type="EMBL" id="D29985">
    <property type="protein sequence ID" value="BAA06264.1"/>
    <property type="molecule type" value="Genomic_DNA"/>
</dbReference>
<dbReference type="EMBL" id="AL009126">
    <property type="protein sequence ID" value="CAB15954.1"/>
    <property type="molecule type" value="Genomic_DNA"/>
</dbReference>
<dbReference type="PIR" id="D70077">
    <property type="entry name" value="D70077"/>
</dbReference>
<dbReference type="RefSeq" id="NP_391797.1">
    <property type="nucleotide sequence ID" value="NC_000964.3"/>
</dbReference>
<dbReference type="RefSeq" id="WP_003227176.1">
    <property type="nucleotide sequence ID" value="NZ_OZ025638.1"/>
</dbReference>
<dbReference type="SMR" id="P42300"/>
<dbReference type="FunCoup" id="P42300">
    <property type="interactions" value="52"/>
</dbReference>
<dbReference type="STRING" id="224308.BSU39180"/>
<dbReference type="PaxDb" id="224308-BSU39180"/>
<dbReference type="EnsemblBacteria" id="CAB15954">
    <property type="protein sequence ID" value="CAB15954"/>
    <property type="gene ID" value="BSU_39180"/>
</dbReference>
<dbReference type="GeneID" id="937476"/>
<dbReference type="KEGG" id="bsu:BSU39180"/>
<dbReference type="PATRIC" id="fig|224308.179.peg.4242"/>
<dbReference type="InParanoid" id="P42300"/>
<dbReference type="OrthoDB" id="9888468at2"/>
<dbReference type="BioCyc" id="BSUB:BSU39180-MONOMER"/>
<dbReference type="Proteomes" id="UP000001570">
    <property type="component" value="Chromosome"/>
</dbReference>
<gene>
    <name type="primary">yxiH</name>
    <name type="ordered locus">BSU39180</name>
    <name type="ORF">N17K</name>
</gene>
<name>YXIH_BACSU</name>
<sequence length="109" mass="12439">MKKLKLNKIINENTQDCFFHADPQGRVYIGKGLKGGITITIYDPSGDVRDFRVKEQISYSDILLFQQCADGYVFVYYESYEPKVKVFSEEGRVKSVFHLPSGVSCCLLD</sequence>